<feature type="chain" id="PRO_0000260895" description="Large ribosomal subunit protein uL6">
    <location>
        <begin position="1"/>
        <end position="183"/>
    </location>
</feature>
<sequence>MSRIGKKPVKIPAGVEVNIEGNTVTVKGPKGKLTRQFPAEITISREGEELQVSRPSDAKPHRALHGLSRALLQNMVDGVTRGFEKGLELVGVGYRAAKQGNKLVLSVGYSHPVEMVPGEGLEIEVPAPNKVIVKGIDKEAVGALAAKIRDVRPPEPYKGKGIKYEGEYIRRKVGKTGAKGGKK</sequence>
<evidence type="ECO:0000255" key="1">
    <source>
        <dbReference type="HAMAP-Rule" id="MF_01365"/>
    </source>
</evidence>
<evidence type="ECO:0000305" key="2"/>
<name>RL6_MOOTA</name>
<organism>
    <name type="scientific">Moorella thermoacetica (strain ATCC 39073 / JCM 9320)</name>
    <dbReference type="NCBI Taxonomy" id="264732"/>
    <lineage>
        <taxon>Bacteria</taxon>
        <taxon>Bacillati</taxon>
        <taxon>Bacillota</taxon>
        <taxon>Clostridia</taxon>
        <taxon>Moorellales</taxon>
        <taxon>Moorellaceae</taxon>
        <taxon>Moorella</taxon>
    </lineage>
</organism>
<comment type="function">
    <text evidence="1">This protein binds to the 23S rRNA, and is important in its secondary structure. It is located near the subunit interface in the base of the L7/L12 stalk, and near the tRNA binding site of the peptidyltransferase center.</text>
</comment>
<comment type="subunit">
    <text evidence="1">Part of the 50S ribosomal subunit.</text>
</comment>
<comment type="similarity">
    <text evidence="1">Belongs to the universal ribosomal protein uL6 family.</text>
</comment>
<protein>
    <recommendedName>
        <fullName evidence="1">Large ribosomal subunit protein uL6</fullName>
    </recommendedName>
    <alternativeName>
        <fullName evidence="2">50S ribosomal protein L6</fullName>
    </alternativeName>
</protein>
<reference key="1">
    <citation type="journal article" date="2008" name="Environ. Microbiol.">
        <title>The complete genome sequence of Moorella thermoacetica (f. Clostridium thermoaceticum).</title>
        <authorList>
            <person name="Pierce E."/>
            <person name="Xie G."/>
            <person name="Barabote R.D."/>
            <person name="Saunders E."/>
            <person name="Han C.S."/>
            <person name="Detter J.C."/>
            <person name="Richardson P."/>
            <person name="Brettin T.S."/>
            <person name="Das A."/>
            <person name="Ljungdahl L.G."/>
            <person name="Ragsdale S.W."/>
        </authorList>
    </citation>
    <scope>NUCLEOTIDE SEQUENCE [LARGE SCALE GENOMIC DNA]</scope>
    <source>
        <strain>ATCC 39073 / JCM 9320</strain>
    </source>
</reference>
<gene>
    <name evidence="1" type="primary">rplF</name>
    <name type="ordered locus">Moth_2445</name>
</gene>
<proteinExistence type="inferred from homology"/>
<keyword id="KW-0687">Ribonucleoprotein</keyword>
<keyword id="KW-0689">Ribosomal protein</keyword>
<keyword id="KW-0694">RNA-binding</keyword>
<keyword id="KW-0699">rRNA-binding</keyword>
<dbReference type="EMBL" id="CP000232">
    <property type="protein sequence ID" value="ABC20727.1"/>
    <property type="molecule type" value="Genomic_DNA"/>
</dbReference>
<dbReference type="RefSeq" id="YP_431270.1">
    <property type="nucleotide sequence ID" value="NC_007644.1"/>
</dbReference>
<dbReference type="SMR" id="Q2RFR2"/>
<dbReference type="STRING" id="264732.Moth_2445"/>
<dbReference type="EnsemblBacteria" id="ABC20727">
    <property type="protein sequence ID" value="ABC20727"/>
    <property type="gene ID" value="Moth_2445"/>
</dbReference>
<dbReference type="KEGG" id="mta:Moth_2445"/>
<dbReference type="PATRIC" id="fig|264732.11.peg.2663"/>
<dbReference type="eggNOG" id="COG0097">
    <property type="taxonomic scope" value="Bacteria"/>
</dbReference>
<dbReference type="HOGENOM" id="CLU_065464_1_2_9"/>
<dbReference type="OrthoDB" id="9805007at2"/>
<dbReference type="GO" id="GO:0022625">
    <property type="term" value="C:cytosolic large ribosomal subunit"/>
    <property type="evidence" value="ECO:0007669"/>
    <property type="project" value="TreeGrafter"/>
</dbReference>
<dbReference type="GO" id="GO:0019843">
    <property type="term" value="F:rRNA binding"/>
    <property type="evidence" value="ECO:0007669"/>
    <property type="project" value="UniProtKB-UniRule"/>
</dbReference>
<dbReference type="GO" id="GO:0003735">
    <property type="term" value="F:structural constituent of ribosome"/>
    <property type="evidence" value="ECO:0007669"/>
    <property type="project" value="InterPro"/>
</dbReference>
<dbReference type="GO" id="GO:0002181">
    <property type="term" value="P:cytoplasmic translation"/>
    <property type="evidence" value="ECO:0007669"/>
    <property type="project" value="TreeGrafter"/>
</dbReference>
<dbReference type="FunFam" id="3.90.930.12:FF:000001">
    <property type="entry name" value="50S ribosomal protein L6"/>
    <property type="match status" value="1"/>
</dbReference>
<dbReference type="FunFam" id="3.90.930.12:FF:000002">
    <property type="entry name" value="50S ribosomal protein L6"/>
    <property type="match status" value="1"/>
</dbReference>
<dbReference type="Gene3D" id="3.90.930.12">
    <property type="entry name" value="Ribosomal protein L6, alpha-beta domain"/>
    <property type="match status" value="2"/>
</dbReference>
<dbReference type="HAMAP" id="MF_01365_B">
    <property type="entry name" value="Ribosomal_uL6_B"/>
    <property type="match status" value="1"/>
</dbReference>
<dbReference type="InterPro" id="IPR000702">
    <property type="entry name" value="Ribosomal_uL6-like"/>
</dbReference>
<dbReference type="InterPro" id="IPR036789">
    <property type="entry name" value="Ribosomal_uL6-like_a/b-dom_sf"/>
</dbReference>
<dbReference type="InterPro" id="IPR020040">
    <property type="entry name" value="Ribosomal_uL6_a/b-dom"/>
</dbReference>
<dbReference type="InterPro" id="IPR019906">
    <property type="entry name" value="Ribosomal_uL6_bac-type"/>
</dbReference>
<dbReference type="InterPro" id="IPR002358">
    <property type="entry name" value="Ribosomal_uL6_CS"/>
</dbReference>
<dbReference type="NCBIfam" id="TIGR03654">
    <property type="entry name" value="L6_bact"/>
    <property type="match status" value="1"/>
</dbReference>
<dbReference type="PANTHER" id="PTHR11655">
    <property type="entry name" value="60S/50S RIBOSOMAL PROTEIN L6/L9"/>
    <property type="match status" value="1"/>
</dbReference>
<dbReference type="PANTHER" id="PTHR11655:SF14">
    <property type="entry name" value="LARGE RIBOSOMAL SUBUNIT PROTEIN UL6M"/>
    <property type="match status" value="1"/>
</dbReference>
<dbReference type="Pfam" id="PF00347">
    <property type="entry name" value="Ribosomal_L6"/>
    <property type="match status" value="2"/>
</dbReference>
<dbReference type="PIRSF" id="PIRSF002162">
    <property type="entry name" value="Ribosomal_L6"/>
    <property type="match status" value="1"/>
</dbReference>
<dbReference type="PRINTS" id="PR00059">
    <property type="entry name" value="RIBOSOMALL6"/>
</dbReference>
<dbReference type="SUPFAM" id="SSF56053">
    <property type="entry name" value="Ribosomal protein L6"/>
    <property type="match status" value="2"/>
</dbReference>
<dbReference type="PROSITE" id="PS00525">
    <property type="entry name" value="RIBOSOMAL_L6_1"/>
    <property type="match status" value="1"/>
</dbReference>
<accession>Q2RFR2</accession>